<sequence>MSSLAAPQTGLLRQYLVLTKPRVTQLAVFCAVIGMFLAAPGMPDLSHVVFGTLGIWLLAAAAFAINCLIEQEVDARMLRTARRATARGTISDIQVLSLSGLLGGAGMLVLYHLVNPLTMWLTFATFVGYAIIYTVILKPRTPQNIVIGGLSGAMPPALGWAAVADSVPAEAWVLVLIIFIWTPPHFWALALYRNNDYIKAGLPMLPVTHGQQFTRLHILLYSFALLATTLLPYAIRMSGALYLASALALGGMFVWYAWRLYREYSDALARRLFRFSILYLALLFGALLIDHWVGLLR</sequence>
<reference key="1">
    <citation type="journal article" date="2003" name="Nat. Genet.">
        <title>Comparative analysis of the genome sequences of Bordetella pertussis, Bordetella parapertussis and Bordetella bronchiseptica.</title>
        <authorList>
            <person name="Parkhill J."/>
            <person name="Sebaihia M."/>
            <person name="Preston A."/>
            <person name="Murphy L.D."/>
            <person name="Thomson N.R."/>
            <person name="Harris D.E."/>
            <person name="Holden M.T.G."/>
            <person name="Churcher C.M."/>
            <person name="Bentley S.D."/>
            <person name="Mungall K.L."/>
            <person name="Cerdeno-Tarraga A.-M."/>
            <person name="Temple L."/>
            <person name="James K.D."/>
            <person name="Harris B."/>
            <person name="Quail M.A."/>
            <person name="Achtman M."/>
            <person name="Atkin R."/>
            <person name="Baker S."/>
            <person name="Basham D."/>
            <person name="Bason N."/>
            <person name="Cherevach I."/>
            <person name="Chillingworth T."/>
            <person name="Collins M."/>
            <person name="Cronin A."/>
            <person name="Davis P."/>
            <person name="Doggett J."/>
            <person name="Feltwell T."/>
            <person name="Goble A."/>
            <person name="Hamlin N."/>
            <person name="Hauser H."/>
            <person name="Holroyd S."/>
            <person name="Jagels K."/>
            <person name="Leather S."/>
            <person name="Moule S."/>
            <person name="Norberczak H."/>
            <person name="O'Neil S."/>
            <person name="Ormond D."/>
            <person name="Price C."/>
            <person name="Rabbinowitsch E."/>
            <person name="Rutter S."/>
            <person name="Sanders M."/>
            <person name="Saunders D."/>
            <person name="Seeger K."/>
            <person name="Sharp S."/>
            <person name="Simmonds M."/>
            <person name="Skelton J."/>
            <person name="Squares R."/>
            <person name="Squares S."/>
            <person name="Stevens K."/>
            <person name="Unwin L."/>
            <person name="Whitehead S."/>
            <person name="Barrell B.G."/>
            <person name="Maskell D.J."/>
        </authorList>
    </citation>
    <scope>NUCLEOTIDE SEQUENCE [LARGE SCALE GENOMIC DNA]</scope>
    <source>
        <strain>ATCC BAA-588 / NCTC 13252 / RB50</strain>
    </source>
</reference>
<comment type="function">
    <text evidence="1">Converts heme B (protoheme IX) to heme O by substitution of the vinyl group on carbon 2 of heme B porphyrin ring with a hydroxyethyl farnesyl side group.</text>
</comment>
<comment type="catalytic activity">
    <reaction evidence="1">
        <text>heme b + (2E,6E)-farnesyl diphosphate + H2O = Fe(II)-heme o + diphosphate</text>
        <dbReference type="Rhea" id="RHEA:28070"/>
        <dbReference type="ChEBI" id="CHEBI:15377"/>
        <dbReference type="ChEBI" id="CHEBI:33019"/>
        <dbReference type="ChEBI" id="CHEBI:60344"/>
        <dbReference type="ChEBI" id="CHEBI:60530"/>
        <dbReference type="ChEBI" id="CHEBI:175763"/>
        <dbReference type="EC" id="2.5.1.141"/>
    </reaction>
</comment>
<comment type="pathway">
    <text evidence="1">Porphyrin-containing compound metabolism; heme O biosynthesis; heme O from protoheme: step 1/1.</text>
</comment>
<comment type="subcellular location">
    <subcellularLocation>
        <location evidence="1">Cell inner membrane</location>
        <topology evidence="1">Multi-pass membrane protein</topology>
    </subcellularLocation>
</comment>
<comment type="miscellaneous">
    <text evidence="1">Carbon 2 of the heme B porphyrin ring is defined according to the Fischer nomenclature.</text>
</comment>
<comment type="similarity">
    <text evidence="1">Belongs to the UbiA prenyltransferase family. Protoheme IX farnesyltransferase subfamily.</text>
</comment>
<accession>Q7WE16</accession>
<organism>
    <name type="scientific">Bordetella bronchiseptica (strain ATCC BAA-588 / NCTC 13252 / RB50)</name>
    <name type="common">Alcaligenes bronchisepticus</name>
    <dbReference type="NCBI Taxonomy" id="257310"/>
    <lineage>
        <taxon>Bacteria</taxon>
        <taxon>Pseudomonadati</taxon>
        <taxon>Pseudomonadota</taxon>
        <taxon>Betaproteobacteria</taxon>
        <taxon>Burkholderiales</taxon>
        <taxon>Alcaligenaceae</taxon>
        <taxon>Bordetella</taxon>
    </lineage>
</organism>
<feature type="chain" id="PRO_0000327014" description="Protoheme IX farnesyltransferase">
    <location>
        <begin position="1"/>
        <end position="297"/>
    </location>
</feature>
<feature type="transmembrane region" description="Helical" evidence="1">
    <location>
        <begin position="23"/>
        <end position="43"/>
    </location>
</feature>
<feature type="transmembrane region" description="Helical" evidence="1">
    <location>
        <begin position="49"/>
        <end position="69"/>
    </location>
</feature>
<feature type="transmembrane region" description="Helical" evidence="1">
    <location>
        <begin position="93"/>
        <end position="113"/>
    </location>
</feature>
<feature type="transmembrane region" description="Helical" evidence="1">
    <location>
        <begin position="117"/>
        <end position="137"/>
    </location>
</feature>
<feature type="transmembrane region" description="Helical" evidence="1">
    <location>
        <begin position="144"/>
        <end position="164"/>
    </location>
</feature>
<feature type="transmembrane region" description="Helical" evidence="1">
    <location>
        <begin position="171"/>
        <end position="191"/>
    </location>
</feature>
<feature type="transmembrane region" description="Helical" evidence="1">
    <location>
        <begin position="215"/>
        <end position="235"/>
    </location>
</feature>
<feature type="transmembrane region" description="Helical" evidence="1">
    <location>
        <begin position="238"/>
        <end position="258"/>
    </location>
</feature>
<feature type="transmembrane region" description="Helical" evidence="1">
    <location>
        <begin position="275"/>
        <end position="295"/>
    </location>
</feature>
<dbReference type="EC" id="2.5.1.141" evidence="1"/>
<dbReference type="EMBL" id="BX640451">
    <property type="protein sequence ID" value="CAE35185.1"/>
    <property type="molecule type" value="Genomic_DNA"/>
</dbReference>
<dbReference type="SMR" id="Q7WE16"/>
<dbReference type="KEGG" id="bbr:BB4822"/>
<dbReference type="eggNOG" id="COG0109">
    <property type="taxonomic scope" value="Bacteria"/>
</dbReference>
<dbReference type="HOGENOM" id="CLU_029631_0_2_4"/>
<dbReference type="UniPathway" id="UPA00834">
    <property type="reaction ID" value="UER00712"/>
</dbReference>
<dbReference type="Proteomes" id="UP000001027">
    <property type="component" value="Chromosome"/>
</dbReference>
<dbReference type="GO" id="GO:0005886">
    <property type="term" value="C:plasma membrane"/>
    <property type="evidence" value="ECO:0007669"/>
    <property type="project" value="UniProtKB-SubCell"/>
</dbReference>
<dbReference type="GO" id="GO:0008495">
    <property type="term" value="F:protoheme IX farnesyltransferase activity"/>
    <property type="evidence" value="ECO:0007669"/>
    <property type="project" value="UniProtKB-UniRule"/>
</dbReference>
<dbReference type="GO" id="GO:0048034">
    <property type="term" value="P:heme O biosynthetic process"/>
    <property type="evidence" value="ECO:0007669"/>
    <property type="project" value="UniProtKB-UniRule"/>
</dbReference>
<dbReference type="CDD" id="cd13957">
    <property type="entry name" value="PT_UbiA_Cox10"/>
    <property type="match status" value="1"/>
</dbReference>
<dbReference type="Gene3D" id="1.10.357.140">
    <property type="entry name" value="UbiA prenyltransferase"/>
    <property type="match status" value="1"/>
</dbReference>
<dbReference type="HAMAP" id="MF_00154">
    <property type="entry name" value="CyoE_CtaB"/>
    <property type="match status" value="1"/>
</dbReference>
<dbReference type="InterPro" id="IPR006369">
    <property type="entry name" value="Protohaem_IX_farnesylTrfase"/>
</dbReference>
<dbReference type="InterPro" id="IPR000537">
    <property type="entry name" value="UbiA_prenyltransferase"/>
</dbReference>
<dbReference type="InterPro" id="IPR044878">
    <property type="entry name" value="UbiA_sf"/>
</dbReference>
<dbReference type="NCBIfam" id="TIGR01473">
    <property type="entry name" value="cyoE_ctaB"/>
    <property type="match status" value="1"/>
</dbReference>
<dbReference type="NCBIfam" id="NF003349">
    <property type="entry name" value="PRK04375.1-2"/>
    <property type="match status" value="1"/>
</dbReference>
<dbReference type="PANTHER" id="PTHR43448:SF7">
    <property type="entry name" value="4-HYDROXYBENZOATE SOLANESYLTRANSFERASE"/>
    <property type="match status" value="1"/>
</dbReference>
<dbReference type="PANTHER" id="PTHR43448">
    <property type="entry name" value="PROTOHEME IX FARNESYLTRANSFERASE, MITOCHONDRIAL"/>
    <property type="match status" value="1"/>
</dbReference>
<dbReference type="Pfam" id="PF01040">
    <property type="entry name" value="UbiA"/>
    <property type="match status" value="1"/>
</dbReference>
<proteinExistence type="inferred from homology"/>
<keyword id="KW-0997">Cell inner membrane</keyword>
<keyword id="KW-1003">Cell membrane</keyword>
<keyword id="KW-0350">Heme biosynthesis</keyword>
<keyword id="KW-0472">Membrane</keyword>
<keyword id="KW-0808">Transferase</keyword>
<keyword id="KW-0812">Transmembrane</keyword>
<keyword id="KW-1133">Transmembrane helix</keyword>
<evidence type="ECO:0000255" key="1">
    <source>
        <dbReference type="HAMAP-Rule" id="MF_00154"/>
    </source>
</evidence>
<name>COXX_BORBR</name>
<protein>
    <recommendedName>
        <fullName evidence="1">Protoheme IX farnesyltransferase</fullName>
        <ecNumber evidence="1">2.5.1.141</ecNumber>
    </recommendedName>
    <alternativeName>
        <fullName evidence="1">Heme B farnesyltransferase</fullName>
    </alternativeName>
    <alternativeName>
        <fullName evidence="1">Heme O synthase</fullName>
    </alternativeName>
</protein>
<gene>
    <name evidence="1" type="primary">ctaB</name>
    <name type="ordered locus">BB4822</name>
</gene>